<name>RL6_THET8</name>
<organism>
    <name type="scientific">Thermus thermophilus (strain ATCC 27634 / DSM 579 / HB8)</name>
    <dbReference type="NCBI Taxonomy" id="300852"/>
    <lineage>
        <taxon>Bacteria</taxon>
        <taxon>Thermotogati</taxon>
        <taxon>Deinococcota</taxon>
        <taxon>Deinococci</taxon>
        <taxon>Thermales</taxon>
        <taxon>Thermaceae</taxon>
        <taxon>Thermus</taxon>
    </lineage>
</organism>
<dbReference type="EMBL" id="AP008226">
    <property type="protein sequence ID" value="BAD71500.1"/>
    <property type="molecule type" value="Genomic_DNA"/>
</dbReference>
<dbReference type="PIR" id="S15442">
    <property type="entry name" value="S15442"/>
</dbReference>
<dbReference type="RefSeq" id="WP_011173704.1">
    <property type="nucleotide sequence ID" value="NC_006461.1"/>
</dbReference>
<dbReference type="RefSeq" id="YP_144943.1">
    <property type="nucleotide sequence ID" value="NC_006461.1"/>
</dbReference>
<dbReference type="PDB" id="1VVJ">
    <property type="method" value="X-ray"/>
    <property type="resolution" value="3.44 A"/>
    <property type="chains" value="RH/YH=1-180"/>
</dbReference>
<dbReference type="PDB" id="1VY4">
    <property type="method" value="X-ray"/>
    <property type="resolution" value="2.60 A"/>
    <property type="chains" value="BH/DH=1-180"/>
</dbReference>
<dbReference type="PDB" id="1VY5">
    <property type="method" value="X-ray"/>
    <property type="resolution" value="2.55 A"/>
    <property type="chains" value="BH/DH=1-180"/>
</dbReference>
<dbReference type="PDB" id="1VY6">
    <property type="method" value="X-ray"/>
    <property type="resolution" value="2.90 A"/>
    <property type="chains" value="BH/DH=1-180"/>
</dbReference>
<dbReference type="PDB" id="1VY7">
    <property type="method" value="X-ray"/>
    <property type="resolution" value="2.80 A"/>
    <property type="chains" value="BH/DH=1-180"/>
</dbReference>
<dbReference type="PDB" id="4L47">
    <property type="method" value="X-ray"/>
    <property type="resolution" value="3.22 A"/>
    <property type="chains" value="RH/YH=1-180"/>
</dbReference>
<dbReference type="PDB" id="4L71">
    <property type="method" value="X-ray"/>
    <property type="resolution" value="3.90 A"/>
    <property type="chains" value="RH/YH=1-180"/>
</dbReference>
<dbReference type="PDB" id="4LEL">
    <property type="method" value="X-ray"/>
    <property type="resolution" value="3.90 A"/>
    <property type="chains" value="RH/YH=1-180"/>
</dbReference>
<dbReference type="PDB" id="4LFZ">
    <property type="method" value="X-ray"/>
    <property type="resolution" value="3.92 A"/>
    <property type="chains" value="RH/YH=1-180"/>
</dbReference>
<dbReference type="PDB" id="4LNT">
    <property type="method" value="X-ray"/>
    <property type="resolution" value="2.94 A"/>
    <property type="chains" value="RH/YH=1-180"/>
</dbReference>
<dbReference type="PDB" id="4LSK">
    <property type="method" value="X-ray"/>
    <property type="resolution" value="3.48 A"/>
    <property type="chains" value="RH/YH=1-180"/>
</dbReference>
<dbReference type="PDB" id="4LT8">
    <property type="method" value="X-ray"/>
    <property type="resolution" value="3.14 A"/>
    <property type="chains" value="RH/YH=1-180"/>
</dbReference>
<dbReference type="PDB" id="4P6F">
    <property type="method" value="X-ray"/>
    <property type="resolution" value="3.60 A"/>
    <property type="chains" value="RH/YH=1-180"/>
</dbReference>
<dbReference type="PDB" id="4P70">
    <property type="method" value="X-ray"/>
    <property type="resolution" value="3.68 A"/>
    <property type="chains" value="RH/YH=1-180"/>
</dbReference>
<dbReference type="PDB" id="4TUA">
    <property type="method" value="X-ray"/>
    <property type="resolution" value="3.60 A"/>
    <property type="chains" value="RH/YH=1-180"/>
</dbReference>
<dbReference type="PDB" id="4TUB">
    <property type="method" value="X-ray"/>
    <property type="resolution" value="3.60 A"/>
    <property type="chains" value="RH/YH=1-180"/>
</dbReference>
<dbReference type="PDB" id="4TUC">
    <property type="method" value="X-ray"/>
    <property type="resolution" value="3.60 A"/>
    <property type="chains" value="RH/YH=1-180"/>
</dbReference>
<dbReference type="PDB" id="4TUD">
    <property type="method" value="X-ray"/>
    <property type="resolution" value="3.60 A"/>
    <property type="chains" value="RH/YH=1-180"/>
</dbReference>
<dbReference type="PDB" id="4TUE">
    <property type="method" value="X-ray"/>
    <property type="resolution" value="3.50 A"/>
    <property type="chains" value="RH/YH=1-180"/>
</dbReference>
<dbReference type="PDB" id="4V42">
    <property type="method" value="X-ray"/>
    <property type="resolution" value="5.50 A"/>
    <property type="chains" value="BH=26-177"/>
</dbReference>
<dbReference type="PDB" id="4V4P">
    <property type="method" value="X-ray"/>
    <property type="resolution" value="5.50 A"/>
    <property type="chains" value="H=24-177"/>
</dbReference>
<dbReference type="PDB" id="4V4X">
    <property type="method" value="X-ray"/>
    <property type="resolution" value="5.00 A"/>
    <property type="chains" value="BH=1-180"/>
</dbReference>
<dbReference type="PDB" id="4V4Y">
    <property type="method" value="X-ray"/>
    <property type="resolution" value="5.50 A"/>
    <property type="chains" value="BH=1-180"/>
</dbReference>
<dbReference type="PDB" id="4V4Z">
    <property type="method" value="X-ray"/>
    <property type="resolution" value="4.51 A"/>
    <property type="chains" value="BH=1-180"/>
</dbReference>
<dbReference type="PDB" id="4V51">
    <property type="method" value="X-ray"/>
    <property type="resolution" value="2.80 A"/>
    <property type="chains" value="BH/DH=2-180"/>
</dbReference>
<dbReference type="PDB" id="4V5A">
    <property type="method" value="X-ray"/>
    <property type="resolution" value="3.50 A"/>
    <property type="chains" value="BH/DH=2-180"/>
</dbReference>
<dbReference type="PDB" id="4V5C">
    <property type="method" value="X-ray"/>
    <property type="resolution" value="3.30 A"/>
    <property type="chains" value="BH/DH=1-180"/>
</dbReference>
<dbReference type="PDB" id="4V5D">
    <property type="method" value="X-ray"/>
    <property type="resolution" value="3.50 A"/>
    <property type="chains" value="BH/DH=1-180"/>
</dbReference>
<dbReference type="PDB" id="4V5E">
    <property type="method" value="X-ray"/>
    <property type="resolution" value="3.45 A"/>
    <property type="chains" value="BH/DH=1-180"/>
</dbReference>
<dbReference type="PDB" id="4V5F">
    <property type="method" value="X-ray"/>
    <property type="resolution" value="3.60 A"/>
    <property type="chains" value="BH/DH=1-180"/>
</dbReference>
<dbReference type="PDB" id="4V5G">
    <property type="method" value="X-ray"/>
    <property type="resolution" value="3.60 A"/>
    <property type="chains" value="BH/DH=1-180"/>
</dbReference>
<dbReference type="PDB" id="4V5J">
    <property type="method" value="X-ray"/>
    <property type="resolution" value="3.10 A"/>
    <property type="chains" value="BH/DH=1-180"/>
</dbReference>
<dbReference type="PDB" id="4V5K">
    <property type="method" value="X-ray"/>
    <property type="resolution" value="3.20 A"/>
    <property type="chains" value="BH/DH=1-180"/>
</dbReference>
<dbReference type="PDB" id="4V5L">
    <property type="method" value="X-ray"/>
    <property type="resolution" value="3.10 A"/>
    <property type="chains" value="BH=1-180"/>
</dbReference>
<dbReference type="PDB" id="4V5M">
    <property type="method" value="EM"/>
    <property type="resolution" value="7.80 A"/>
    <property type="chains" value="BH=1-180"/>
</dbReference>
<dbReference type="PDB" id="4V5N">
    <property type="method" value="EM"/>
    <property type="resolution" value="7.60 A"/>
    <property type="chains" value="BH=1-180"/>
</dbReference>
<dbReference type="PDB" id="4V5P">
    <property type="method" value="X-ray"/>
    <property type="resolution" value="3.10 A"/>
    <property type="chains" value="BH/DH=1-180"/>
</dbReference>
<dbReference type="PDB" id="4V5Q">
    <property type="method" value="X-ray"/>
    <property type="resolution" value="3.10 A"/>
    <property type="chains" value="BH/DH=1-180"/>
</dbReference>
<dbReference type="PDB" id="4V5R">
    <property type="method" value="X-ray"/>
    <property type="resolution" value="3.10 A"/>
    <property type="chains" value="BH/DH=1-180"/>
</dbReference>
<dbReference type="PDB" id="4V5S">
    <property type="method" value="X-ray"/>
    <property type="resolution" value="3.10 A"/>
    <property type="chains" value="BH/DH=1-180"/>
</dbReference>
<dbReference type="PDB" id="4V68">
    <property type="method" value="EM"/>
    <property type="resolution" value="6.40 A"/>
    <property type="chains" value="BH=12-171"/>
</dbReference>
<dbReference type="PDB" id="4V6A">
    <property type="method" value="X-ray"/>
    <property type="resolution" value="3.10 A"/>
    <property type="chains" value="BH/DH=1-180"/>
</dbReference>
<dbReference type="PDB" id="4V6F">
    <property type="method" value="X-ray"/>
    <property type="resolution" value="3.10 A"/>
    <property type="chains" value="AH/DH=1-180"/>
</dbReference>
<dbReference type="PDB" id="4V6G">
    <property type="method" value="X-ray"/>
    <property type="resolution" value="3.50 A"/>
    <property type="chains" value="BH/DH=1-180"/>
</dbReference>
<dbReference type="PDB" id="4V7J">
    <property type="method" value="X-ray"/>
    <property type="resolution" value="3.30 A"/>
    <property type="chains" value="AH/BH=1-180"/>
</dbReference>
<dbReference type="PDB" id="4V7K">
    <property type="method" value="X-ray"/>
    <property type="resolution" value="3.60 A"/>
    <property type="chains" value="AH/BH=1-180"/>
</dbReference>
<dbReference type="PDB" id="4V7L">
    <property type="method" value="X-ray"/>
    <property type="resolution" value="3.00 A"/>
    <property type="chains" value="BH/DH=1-180"/>
</dbReference>
<dbReference type="PDB" id="4V7M">
    <property type="method" value="X-ray"/>
    <property type="resolution" value="3.45 A"/>
    <property type="chains" value="BH/DH=1-180"/>
</dbReference>
<dbReference type="PDB" id="4V7W">
    <property type="method" value="X-ray"/>
    <property type="resolution" value="3.00 A"/>
    <property type="chains" value="BH/DH=1-180"/>
</dbReference>
<dbReference type="PDB" id="4V7X">
    <property type="method" value="X-ray"/>
    <property type="resolution" value="3.00 A"/>
    <property type="chains" value="BH/DH=1-180"/>
</dbReference>
<dbReference type="PDB" id="4V7Y">
    <property type="method" value="X-ray"/>
    <property type="resolution" value="3.00 A"/>
    <property type="chains" value="BH/DH=1-180"/>
</dbReference>
<dbReference type="PDB" id="4V7Z">
    <property type="method" value="X-ray"/>
    <property type="resolution" value="3.10 A"/>
    <property type="chains" value="BH/DH=1-180"/>
</dbReference>
<dbReference type="PDB" id="4V87">
    <property type="method" value="X-ray"/>
    <property type="resolution" value="3.10 A"/>
    <property type="chains" value="AH/DH=2-171"/>
</dbReference>
<dbReference type="PDB" id="4V8A">
    <property type="method" value="X-ray"/>
    <property type="resolution" value="3.20 A"/>
    <property type="chains" value="AH/BH=1-180"/>
</dbReference>
<dbReference type="PDB" id="4V8B">
    <property type="method" value="X-ray"/>
    <property type="resolution" value="3.00 A"/>
    <property type="chains" value="BH/DH=1-180"/>
</dbReference>
<dbReference type="PDB" id="4V8C">
    <property type="method" value="X-ray"/>
    <property type="resolution" value="3.30 A"/>
    <property type="chains" value="AH/BH=1-180"/>
</dbReference>
<dbReference type="PDB" id="4V8D">
    <property type="method" value="X-ray"/>
    <property type="resolution" value="3.00 A"/>
    <property type="chains" value="BH/DH=1-180"/>
</dbReference>
<dbReference type="PDB" id="4V8E">
    <property type="method" value="X-ray"/>
    <property type="resolution" value="3.30 A"/>
    <property type="chains" value="AH/CH=1-180"/>
</dbReference>
<dbReference type="PDB" id="4V8F">
    <property type="method" value="X-ray"/>
    <property type="resolution" value="3.30 A"/>
    <property type="chains" value="AH/DH=1-180"/>
</dbReference>
<dbReference type="PDB" id="4V8G">
    <property type="method" value="X-ray"/>
    <property type="resolution" value="3.00 A"/>
    <property type="chains" value="BH/DH=1-180"/>
</dbReference>
<dbReference type="PDB" id="4V8H">
    <property type="method" value="X-ray"/>
    <property type="resolution" value="3.10 A"/>
    <property type="chains" value="BH/DH=1-180"/>
</dbReference>
<dbReference type="PDB" id="4V8I">
    <property type="method" value="X-ray"/>
    <property type="resolution" value="2.70 A"/>
    <property type="chains" value="BH/DH=1-180"/>
</dbReference>
<dbReference type="PDB" id="4V8J">
    <property type="method" value="X-ray"/>
    <property type="resolution" value="3.90 A"/>
    <property type="chains" value="BH/DH=1-180"/>
</dbReference>
<dbReference type="PDB" id="4V8N">
    <property type="method" value="X-ray"/>
    <property type="resolution" value="3.10 A"/>
    <property type="chains" value="BH/DH=1-180"/>
</dbReference>
<dbReference type="PDB" id="4V8O">
    <property type="method" value="X-ray"/>
    <property type="resolution" value="3.80 A"/>
    <property type="chains" value="BH=1-180"/>
</dbReference>
<dbReference type="PDB" id="4V8Q">
    <property type="method" value="X-ray"/>
    <property type="resolution" value="3.10 A"/>
    <property type="chains" value="AH=1-180"/>
</dbReference>
<dbReference type="PDB" id="4V8U">
    <property type="method" value="X-ray"/>
    <property type="resolution" value="3.70 A"/>
    <property type="chains" value="BH/DH=1-180"/>
</dbReference>
<dbReference type="PDB" id="4V8X">
    <property type="method" value="X-ray"/>
    <property type="resolution" value="3.35 A"/>
    <property type="chains" value="BH/DH=1-180"/>
</dbReference>
<dbReference type="PDB" id="4V90">
    <property type="method" value="X-ray"/>
    <property type="resolution" value="2.95 A"/>
    <property type="chains" value="BH=1-180"/>
</dbReference>
<dbReference type="PDB" id="4V95">
    <property type="method" value="X-ray"/>
    <property type="resolution" value="3.20 A"/>
    <property type="chains" value="BH/DH=1-180"/>
</dbReference>
<dbReference type="PDB" id="4V97">
    <property type="method" value="X-ray"/>
    <property type="resolution" value="3.52 A"/>
    <property type="chains" value="BH/DH=1-180"/>
</dbReference>
<dbReference type="PDB" id="4V9A">
    <property type="method" value="X-ray"/>
    <property type="resolution" value="3.30 A"/>
    <property type="chains" value="BH/DH=1-180"/>
</dbReference>
<dbReference type="PDB" id="4V9B">
    <property type="method" value="X-ray"/>
    <property type="resolution" value="3.10 A"/>
    <property type="chains" value="BH/DH=1-180"/>
</dbReference>
<dbReference type="PDB" id="4V9H">
    <property type="method" value="X-ray"/>
    <property type="resolution" value="2.86 A"/>
    <property type="chains" value="BH=1-180"/>
</dbReference>
<dbReference type="PDB" id="4V9I">
    <property type="method" value="X-ray"/>
    <property type="resolution" value="3.30 A"/>
    <property type="chains" value="BH/DH=12-170"/>
</dbReference>
<dbReference type="PDB" id="4V9R">
    <property type="method" value="X-ray"/>
    <property type="resolution" value="3.00 A"/>
    <property type="chains" value="BH/DH=1-180"/>
</dbReference>
<dbReference type="PDB" id="4V9S">
    <property type="method" value="X-ray"/>
    <property type="resolution" value="3.10 A"/>
    <property type="chains" value="BH/DH=1-180"/>
</dbReference>
<dbReference type="PDB" id="4W2E">
    <property type="method" value="X-ray"/>
    <property type="resolution" value="2.90 A"/>
    <property type="chains" value="H=1-180"/>
</dbReference>
<dbReference type="PDB" id="4W2F">
    <property type="method" value="X-ray"/>
    <property type="resolution" value="2.40 A"/>
    <property type="chains" value="BH/DH=1-180"/>
</dbReference>
<dbReference type="PDB" id="4W2G">
    <property type="method" value="X-ray"/>
    <property type="resolution" value="2.55 A"/>
    <property type="chains" value="BH/DH=1-180"/>
</dbReference>
<dbReference type="PDB" id="4W2H">
    <property type="method" value="X-ray"/>
    <property type="resolution" value="2.70 A"/>
    <property type="chains" value="BH/DH=1-180"/>
</dbReference>
<dbReference type="PDB" id="4W2I">
    <property type="method" value="X-ray"/>
    <property type="resolution" value="2.70 A"/>
    <property type="chains" value="BH/DH=1-180"/>
</dbReference>
<dbReference type="PDB" id="4W4G">
    <property type="method" value="X-ray"/>
    <property type="resolution" value="3.30 A"/>
    <property type="chains" value="RH/YH=1-180"/>
</dbReference>
<dbReference type="PDB" id="4WPO">
    <property type="method" value="X-ray"/>
    <property type="resolution" value="2.80 A"/>
    <property type="chains" value="AH/CH=1-180"/>
</dbReference>
<dbReference type="PDB" id="4WQ1">
    <property type="method" value="X-ray"/>
    <property type="resolution" value="3.10 A"/>
    <property type="chains" value="51/59=1-180"/>
</dbReference>
<dbReference type="PDB" id="4WQF">
    <property type="method" value="X-ray"/>
    <property type="resolution" value="2.80 A"/>
    <property type="chains" value="AH/CH=1-180"/>
</dbReference>
<dbReference type="PDB" id="4WQR">
    <property type="method" value="X-ray"/>
    <property type="resolution" value="3.15 A"/>
    <property type="chains" value="51/59=1-180"/>
</dbReference>
<dbReference type="PDB" id="4WQU">
    <property type="method" value="X-ray"/>
    <property type="resolution" value="2.80 A"/>
    <property type="chains" value="AH/CH=1-180"/>
</dbReference>
<dbReference type="PDB" id="4WQY">
    <property type="method" value="X-ray"/>
    <property type="resolution" value="2.80 A"/>
    <property type="chains" value="AH/CH=1-180"/>
</dbReference>
<dbReference type="PDB" id="4WR6">
    <property type="method" value="X-ray"/>
    <property type="resolution" value="3.05 A"/>
    <property type="chains" value="51/59=1-180"/>
</dbReference>
<dbReference type="PDB" id="4WRA">
    <property type="method" value="X-ray"/>
    <property type="resolution" value="3.05 A"/>
    <property type="chains" value="51/59=1-180"/>
</dbReference>
<dbReference type="PDB" id="4WRO">
    <property type="method" value="X-ray"/>
    <property type="resolution" value="3.05 A"/>
    <property type="chains" value="51=1-180"/>
</dbReference>
<dbReference type="PDB" id="4WSD">
    <property type="method" value="X-ray"/>
    <property type="resolution" value="2.95 A"/>
    <property type="chains" value="51/59=1-180"/>
</dbReference>
<dbReference type="PDB" id="4WSM">
    <property type="method" value="X-ray"/>
    <property type="resolution" value="3.30 A"/>
    <property type="chains" value="51/59=1-180"/>
</dbReference>
<dbReference type="PDB" id="4WT1">
    <property type="method" value="X-ray"/>
    <property type="resolution" value="3.05 A"/>
    <property type="chains" value="51/59=1-180"/>
</dbReference>
<dbReference type="PDB" id="4WT8">
    <property type="method" value="X-ray"/>
    <property type="resolution" value="3.40 A"/>
    <property type="chains" value="CF/DF=12-170"/>
</dbReference>
<dbReference type="PDB" id="4WU1">
    <property type="method" value="X-ray"/>
    <property type="resolution" value="3.20 A"/>
    <property type="chains" value="51/59=1-180"/>
</dbReference>
<dbReference type="PDB" id="4WZD">
    <property type="method" value="X-ray"/>
    <property type="resolution" value="3.10 A"/>
    <property type="chains" value="51/59=1-180"/>
</dbReference>
<dbReference type="PDB" id="4WZO">
    <property type="method" value="X-ray"/>
    <property type="resolution" value="3.30 A"/>
    <property type="chains" value="51/59=1-180"/>
</dbReference>
<dbReference type="PDB" id="4Y4O">
    <property type="method" value="X-ray"/>
    <property type="resolution" value="2.30 A"/>
    <property type="chains" value="1H/2H=1-180"/>
</dbReference>
<dbReference type="PDB" id="4Y4P">
    <property type="method" value="X-ray"/>
    <property type="resolution" value="2.50 A"/>
    <property type="chains" value="1H/2H=1-180"/>
</dbReference>
<dbReference type="PDB" id="4YPB">
    <property type="method" value="X-ray"/>
    <property type="resolution" value="3.40 A"/>
    <property type="chains" value="RH/YH=1-180"/>
</dbReference>
<dbReference type="PDB" id="4YZV">
    <property type="method" value="X-ray"/>
    <property type="resolution" value="3.10 A"/>
    <property type="chains" value="RH/YH=1-180"/>
</dbReference>
<dbReference type="PDB" id="4Z3S">
    <property type="method" value="X-ray"/>
    <property type="resolution" value="2.65 A"/>
    <property type="chains" value="1H/2H=1-180"/>
</dbReference>
<dbReference type="PDB" id="4Z8C">
    <property type="method" value="X-ray"/>
    <property type="resolution" value="2.90 A"/>
    <property type="chains" value="1H/2H=1-180"/>
</dbReference>
<dbReference type="PDB" id="4ZER">
    <property type="method" value="X-ray"/>
    <property type="resolution" value="3.10 A"/>
    <property type="chains" value="1H/2H=2-175"/>
</dbReference>
<dbReference type="PDB" id="4ZSN">
    <property type="method" value="X-ray"/>
    <property type="resolution" value="3.60 A"/>
    <property type="chains" value="RH/YH=1-180"/>
</dbReference>
<dbReference type="PDB" id="5A9Z">
    <property type="method" value="EM"/>
    <property type="resolution" value="4.70 A"/>
    <property type="chains" value="AH=4-177"/>
</dbReference>
<dbReference type="PDB" id="5AA0">
    <property type="method" value="EM"/>
    <property type="resolution" value="5.00 A"/>
    <property type="chains" value="AH=4-177"/>
</dbReference>
<dbReference type="PDB" id="5CZP">
    <property type="method" value="X-ray"/>
    <property type="resolution" value="3.30 A"/>
    <property type="chains" value="RH/YH=1-180"/>
</dbReference>
<dbReference type="PDB" id="5D8B">
    <property type="method" value="X-ray"/>
    <property type="resolution" value="3.63 A"/>
    <property type="chains" value="AB/E=1-180"/>
</dbReference>
<dbReference type="PDB" id="5DFE">
    <property type="method" value="X-ray"/>
    <property type="resolution" value="3.10 A"/>
    <property type="chains" value="RH/YH=1-180"/>
</dbReference>
<dbReference type="PDB" id="5DOX">
    <property type="method" value="X-ray"/>
    <property type="resolution" value="3.10 A"/>
    <property type="chains" value="1H/2H=1-180"/>
</dbReference>
<dbReference type="PDB" id="5DOY">
    <property type="method" value="X-ray"/>
    <property type="resolution" value="2.60 A"/>
    <property type="chains" value="1H/2H=1-180"/>
</dbReference>
<dbReference type="PDB" id="5E7K">
    <property type="method" value="X-ray"/>
    <property type="resolution" value="3.20 A"/>
    <property type="chains" value="51/59=1-180"/>
</dbReference>
<dbReference type="PDB" id="5E81">
    <property type="method" value="X-ray"/>
    <property type="resolution" value="2.95 A"/>
    <property type="chains" value="51/59=1-180"/>
</dbReference>
<dbReference type="PDB" id="5EL4">
    <property type="method" value="X-ray"/>
    <property type="resolution" value="3.15 A"/>
    <property type="chains" value="51/59=1-180"/>
</dbReference>
<dbReference type="PDB" id="5EL5">
    <property type="method" value="X-ray"/>
    <property type="resolution" value="3.15 A"/>
    <property type="chains" value="51/59=1-180"/>
</dbReference>
<dbReference type="PDB" id="5EL6">
    <property type="method" value="X-ray"/>
    <property type="resolution" value="3.10 A"/>
    <property type="chains" value="51/59=1-180"/>
</dbReference>
<dbReference type="PDB" id="5EL7">
    <property type="method" value="X-ray"/>
    <property type="resolution" value="3.15 A"/>
    <property type="chains" value="51/59=1-180"/>
</dbReference>
<dbReference type="PDB" id="5F8K">
    <property type="method" value="X-ray"/>
    <property type="resolution" value="2.80 A"/>
    <property type="chains" value="1H/2H=2-175"/>
</dbReference>
<dbReference type="PDB" id="5FDU">
    <property type="method" value="X-ray"/>
    <property type="resolution" value="2.90 A"/>
    <property type="chains" value="1H/2H=2-175"/>
</dbReference>
<dbReference type="PDB" id="5FDV">
    <property type="method" value="X-ray"/>
    <property type="resolution" value="2.80 A"/>
    <property type="chains" value="1H/2H=2-175"/>
</dbReference>
<dbReference type="PDB" id="5HAU">
    <property type="method" value="X-ray"/>
    <property type="resolution" value="3.00 A"/>
    <property type="chains" value="1H/2H=1-180"/>
</dbReference>
<dbReference type="PDB" id="5HCP">
    <property type="method" value="X-ray"/>
    <property type="resolution" value="2.89 A"/>
    <property type="chains" value="1H/2H=1-180"/>
</dbReference>
<dbReference type="PDB" id="5HCQ">
    <property type="method" value="X-ray"/>
    <property type="resolution" value="2.80 A"/>
    <property type="chains" value="1H/2H=1-180"/>
</dbReference>
<dbReference type="PDB" id="5HCR">
    <property type="method" value="X-ray"/>
    <property type="resolution" value="2.80 A"/>
    <property type="chains" value="1H/2H=1-180"/>
</dbReference>
<dbReference type="PDB" id="5HD1">
    <property type="method" value="X-ray"/>
    <property type="resolution" value="2.70 A"/>
    <property type="chains" value="1H/2H=1-180"/>
</dbReference>
<dbReference type="PDB" id="5IB7">
    <property type="method" value="X-ray"/>
    <property type="resolution" value="2.99 A"/>
    <property type="chains" value="51/59=1-180"/>
</dbReference>
<dbReference type="PDB" id="5IB8">
    <property type="method" value="X-ray"/>
    <property type="resolution" value="3.13 A"/>
    <property type="chains" value="51/59=1-180"/>
</dbReference>
<dbReference type="PDB" id="5IBB">
    <property type="method" value="X-ray"/>
    <property type="resolution" value="2.96 A"/>
    <property type="chains" value="51/59=1-180"/>
</dbReference>
<dbReference type="PDB" id="5IMQ">
    <property type="method" value="EM"/>
    <property type="resolution" value="3.80 A"/>
    <property type="chains" value="e=1-180"/>
</dbReference>
<dbReference type="PDB" id="5IMR">
    <property type="method" value="EM"/>
    <property type="chains" value="e=1-180"/>
</dbReference>
<dbReference type="PDB" id="5J30">
    <property type="method" value="X-ray"/>
    <property type="resolution" value="3.20 A"/>
    <property type="chains" value="RH/YH=1-180"/>
</dbReference>
<dbReference type="PDB" id="5J3C">
    <property type="method" value="X-ray"/>
    <property type="resolution" value="3.04 A"/>
    <property type="chains" value="RH/YH=1-180"/>
</dbReference>
<dbReference type="PDB" id="5J4B">
    <property type="method" value="X-ray"/>
    <property type="resolution" value="2.60 A"/>
    <property type="chains" value="1H/2H=1-180"/>
</dbReference>
<dbReference type="PDB" id="5J4C">
    <property type="method" value="X-ray"/>
    <property type="resolution" value="2.80 A"/>
    <property type="chains" value="1H/2H=1-180"/>
</dbReference>
<dbReference type="PDB" id="5J8B">
    <property type="method" value="X-ray"/>
    <property type="resolution" value="2.60 A"/>
    <property type="chains" value="H=1-180"/>
</dbReference>
<dbReference type="PDB" id="5NDJ">
    <property type="method" value="X-ray"/>
    <property type="resolution" value="3.15 A"/>
    <property type="chains" value="51/59=1-180"/>
</dbReference>
<dbReference type="PDB" id="5NDK">
    <property type="method" value="X-ray"/>
    <property type="resolution" value="2.95 A"/>
    <property type="chains" value="51/59=1-180"/>
</dbReference>
<dbReference type="PDB" id="5OT7">
    <property type="method" value="EM"/>
    <property type="resolution" value="3.80 A"/>
    <property type="chains" value="k=1-176"/>
</dbReference>
<dbReference type="PDB" id="5UQ7">
    <property type="method" value="EM"/>
    <property type="resolution" value="3.50 A"/>
    <property type="chains" value="H=3-175"/>
</dbReference>
<dbReference type="PDB" id="5UQ8">
    <property type="method" value="EM"/>
    <property type="resolution" value="3.20 A"/>
    <property type="chains" value="H=3-175"/>
</dbReference>
<dbReference type="PDB" id="5VP2">
    <property type="method" value="X-ray"/>
    <property type="resolution" value="2.80 A"/>
    <property type="chains" value="1H/2H=1-180"/>
</dbReference>
<dbReference type="PDB" id="5VPO">
    <property type="method" value="X-ray"/>
    <property type="resolution" value="3.34 A"/>
    <property type="chains" value="RH/YH=1-180"/>
</dbReference>
<dbReference type="PDB" id="5VPP">
    <property type="method" value="X-ray"/>
    <property type="resolution" value="3.90 A"/>
    <property type="chains" value="RH/YH=1-180"/>
</dbReference>
<dbReference type="PDB" id="5W4K">
    <property type="method" value="X-ray"/>
    <property type="resolution" value="2.70 A"/>
    <property type="chains" value="1H/2H=1-180"/>
</dbReference>
<dbReference type="PDB" id="5WIS">
    <property type="method" value="X-ray"/>
    <property type="resolution" value="2.70 A"/>
    <property type="chains" value="1H/2H=1-180"/>
</dbReference>
<dbReference type="PDB" id="5WIT">
    <property type="method" value="X-ray"/>
    <property type="resolution" value="2.60 A"/>
    <property type="chains" value="1H/2H=1-180"/>
</dbReference>
<dbReference type="PDB" id="5ZLU">
    <property type="method" value="EM"/>
    <property type="resolution" value="3.60 A"/>
    <property type="chains" value="d=1-180"/>
</dbReference>
<dbReference type="PDB" id="6BUW">
    <property type="method" value="X-ray"/>
    <property type="resolution" value="3.50 A"/>
    <property type="chains" value="RH/YH=1-180"/>
</dbReference>
<dbReference type="PDB" id="6BZ6">
    <property type="method" value="X-ray"/>
    <property type="resolution" value="3.18 A"/>
    <property type="chains" value="RH/YH=1-180"/>
</dbReference>
<dbReference type="PDB" id="6BZ7">
    <property type="method" value="X-ray"/>
    <property type="resolution" value="3.68 A"/>
    <property type="chains" value="RH/YH=1-180"/>
</dbReference>
<dbReference type="PDB" id="6BZ8">
    <property type="method" value="X-ray"/>
    <property type="resolution" value="3.74 A"/>
    <property type="chains" value="RH/YH=1-180"/>
</dbReference>
<dbReference type="PDB" id="6C5L">
    <property type="method" value="X-ray"/>
    <property type="resolution" value="3.20 A"/>
    <property type="chains" value="BH/DH=1-180"/>
</dbReference>
<dbReference type="PDB" id="6CAE">
    <property type="method" value="X-ray"/>
    <property type="resolution" value="2.60 A"/>
    <property type="chains" value="1H/2H=1-180"/>
</dbReference>
<dbReference type="PDB" id="6CFJ">
    <property type="method" value="X-ray"/>
    <property type="resolution" value="2.80 A"/>
    <property type="chains" value="1H/2H=1-180"/>
</dbReference>
<dbReference type="PDB" id="6CFK">
    <property type="method" value="X-ray"/>
    <property type="resolution" value="2.70 A"/>
    <property type="chains" value="1H/2H=1-180"/>
</dbReference>
<dbReference type="PDB" id="6CFL">
    <property type="method" value="X-ray"/>
    <property type="resolution" value="2.60 A"/>
    <property type="chains" value="1H/2H=1-180"/>
</dbReference>
<dbReference type="PDB" id="6CZR">
    <property type="method" value="X-ray"/>
    <property type="resolution" value="3.14 A"/>
    <property type="chains" value="1H/2H=2-175"/>
</dbReference>
<dbReference type="PDB" id="6FKR">
    <property type="method" value="X-ray"/>
    <property type="resolution" value="3.20 A"/>
    <property type="chains" value="1H/2H=2-175"/>
</dbReference>
<dbReference type="PDB" id="6GSJ">
    <property type="method" value="X-ray"/>
    <property type="resolution" value="2.96 A"/>
    <property type="chains" value="51/59=1-180"/>
</dbReference>
<dbReference type="PDB" id="6GSK">
    <property type="method" value="X-ray"/>
    <property type="resolution" value="3.36 A"/>
    <property type="chains" value="51/59=1-180"/>
</dbReference>
<dbReference type="PDB" id="6GSL">
    <property type="method" value="X-ray"/>
    <property type="resolution" value="3.16 A"/>
    <property type="chains" value="51/59=1-180"/>
</dbReference>
<dbReference type="PDB" id="6GZQ">
    <property type="method" value="EM"/>
    <property type="resolution" value="3.28 A"/>
    <property type="chains" value="G1=2-171"/>
</dbReference>
<dbReference type="PDB" id="6GZX">
    <property type="method" value="EM"/>
    <property type="resolution" value="4.57 A"/>
    <property type="chains" value="G1/G2=2-171"/>
</dbReference>
<dbReference type="PDB" id="6GZZ">
    <property type="method" value="EM"/>
    <property type="resolution" value="4.13 A"/>
    <property type="chains" value="G1/G2=2-171"/>
</dbReference>
<dbReference type="PDB" id="6N9E">
    <property type="method" value="X-ray"/>
    <property type="resolution" value="3.70 A"/>
    <property type="chains" value="1H/2H=1-180"/>
</dbReference>
<dbReference type="PDB" id="6N9F">
    <property type="method" value="X-ray"/>
    <property type="resolution" value="3.70 A"/>
    <property type="chains" value="1H/2H=1-180"/>
</dbReference>
<dbReference type="PDB" id="6ND5">
    <property type="method" value="X-ray"/>
    <property type="resolution" value="2.60 A"/>
    <property type="chains" value="1H/2H=1-180"/>
</dbReference>
<dbReference type="PDB" id="6ND6">
    <property type="method" value="X-ray"/>
    <property type="resolution" value="2.85 A"/>
    <property type="chains" value="1H/2H=1-180"/>
</dbReference>
<dbReference type="PDB" id="6NDK">
    <property type="method" value="X-ray"/>
    <property type="resolution" value="3.64 A"/>
    <property type="chains" value="RH/YH=1-180"/>
</dbReference>
<dbReference type="PDB" id="6NSH">
    <property type="method" value="X-ray"/>
    <property type="resolution" value="3.40 A"/>
    <property type="chains" value="RH/YH=1-180"/>
</dbReference>
<dbReference type="PDB" id="6NTA">
    <property type="method" value="X-ray"/>
    <property type="resolution" value="3.10 A"/>
    <property type="chains" value="RH/YH=1-180"/>
</dbReference>
<dbReference type="PDB" id="6NUO">
    <property type="method" value="X-ray"/>
    <property type="resolution" value="3.20 A"/>
    <property type="chains" value="RH/YH=1-180"/>
</dbReference>
<dbReference type="PDB" id="6NWY">
    <property type="method" value="X-ray"/>
    <property type="resolution" value="3.50 A"/>
    <property type="chains" value="RH/YH=1-180"/>
</dbReference>
<dbReference type="PDB" id="6O3M">
    <property type="method" value="X-ray"/>
    <property type="resolution" value="3.97 A"/>
    <property type="chains" value="RH/YH=1-180"/>
</dbReference>
<dbReference type="PDB" id="6O97">
    <property type="method" value="X-ray"/>
    <property type="resolution" value="2.75 A"/>
    <property type="chains" value="1H/2H=1-180"/>
</dbReference>
<dbReference type="PDB" id="6OF1">
    <property type="method" value="X-ray"/>
    <property type="resolution" value="2.80 A"/>
    <property type="chains" value="1H/2H=1-180"/>
</dbReference>
<dbReference type="PDB" id="6OF6">
    <property type="method" value="X-ray"/>
    <property type="resolution" value="3.20 A"/>
    <property type="chains" value="RH/YH=1-180"/>
</dbReference>
<dbReference type="PDB" id="6OJ2">
    <property type="method" value="X-ray"/>
    <property type="resolution" value="3.20 A"/>
    <property type="chains" value="RH/YH=1-180"/>
</dbReference>
<dbReference type="PDB" id="6OPE">
    <property type="method" value="X-ray"/>
    <property type="resolution" value="3.10 A"/>
    <property type="chains" value="RH/YH=1-180"/>
</dbReference>
<dbReference type="PDB" id="6ORD">
    <property type="method" value="X-ray"/>
    <property type="resolution" value="3.10 A"/>
    <property type="chains" value="RH/YH=1-180"/>
</dbReference>
<dbReference type="PDB" id="6OSI">
    <property type="method" value="X-ray"/>
    <property type="resolution" value="4.14 A"/>
    <property type="chains" value="RH/YH=1-180"/>
</dbReference>
<dbReference type="PDB" id="6OTR">
    <property type="method" value="X-ray"/>
    <property type="resolution" value="3.12 A"/>
    <property type="chains" value="RH/YH=1-180"/>
</dbReference>
<dbReference type="PDB" id="6OXA">
    <property type="method" value="X-ray"/>
    <property type="resolution" value="3.25 A"/>
    <property type="chains" value="RH/YH=1-180"/>
</dbReference>
<dbReference type="PDB" id="6OXI">
    <property type="method" value="X-ray"/>
    <property type="resolution" value="3.50 A"/>
    <property type="chains" value="RH/YH=1-180"/>
</dbReference>
<dbReference type="PDB" id="6Q95">
    <property type="method" value="EM"/>
    <property type="resolution" value="3.70 A"/>
    <property type="chains" value="F=12-171"/>
</dbReference>
<dbReference type="PDB" id="6QNQ">
    <property type="method" value="X-ray"/>
    <property type="resolution" value="3.50 A"/>
    <property type="chains" value="51/59=1-180"/>
</dbReference>
<dbReference type="PDB" id="6QNR">
    <property type="method" value="X-ray"/>
    <property type="resolution" value="3.10 A"/>
    <property type="chains" value="51/59=1-180"/>
</dbReference>
<dbReference type="PDB" id="6UCQ">
    <property type="method" value="X-ray"/>
    <property type="resolution" value="3.50 A"/>
    <property type="chains" value="1H/2H=1-180"/>
</dbReference>
<dbReference type="PDB" id="6UO1">
    <property type="method" value="X-ray"/>
    <property type="resolution" value="2.95 A"/>
    <property type="chains" value="1H/2H=1-180"/>
</dbReference>
<dbReference type="PDB" id="6XHV">
    <property type="method" value="X-ray"/>
    <property type="resolution" value="2.40 A"/>
    <property type="chains" value="1H/2H=1-180"/>
</dbReference>
<dbReference type="PDB" id="6XHW">
    <property type="method" value="X-ray"/>
    <property type="resolution" value="2.50 A"/>
    <property type="chains" value="1H/2H=1-180"/>
</dbReference>
<dbReference type="PDB" id="6XHX">
    <property type="method" value="X-ray"/>
    <property type="resolution" value="2.55 A"/>
    <property type="chains" value="1H/2H=1-180"/>
</dbReference>
<dbReference type="PDB" id="6XHY">
    <property type="method" value="X-ray"/>
    <property type="resolution" value="2.60 A"/>
    <property type="chains" value="1H/2H=1-180"/>
</dbReference>
<dbReference type="PDB" id="6XQD">
    <property type="method" value="X-ray"/>
    <property type="resolution" value="2.80 A"/>
    <property type="chains" value="1H/2H=1-180"/>
</dbReference>
<dbReference type="PDB" id="6XQE">
    <property type="method" value="X-ray"/>
    <property type="resolution" value="3.00 A"/>
    <property type="chains" value="1H/2H=1-180"/>
</dbReference>
<dbReference type="PDB" id="7AZO">
    <property type="method" value="X-ray"/>
    <property type="resolution" value="3.30 A"/>
    <property type="chains" value="L6A/L6B=1-180"/>
</dbReference>
<dbReference type="PDB" id="7AZS">
    <property type="method" value="X-ray"/>
    <property type="resolution" value="3.10 A"/>
    <property type="chains" value="L6A/L6B=1-180"/>
</dbReference>
<dbReference type="PDB" id="7JQL">
    <property type="method" value="X-ray"/>
    <property type="resolution" value="3.00 A"/>
    <property type="chains" value="1H/2H=1-180"/>
</dbReference>
<dbReference type="PDB" id="7JQM">
    <property type="method" value="X-ray"/>
    <property type="resolution" value="3.05 A"/>
    <property type="chains" value="1H/2H=1-180"/>
</dbReference>
<dbReference type="PDB" id="7LH5">
    <property type="method" value="X-ray"/>
    <property type="resolution" value="3.27 A"/>
    <property type="chains" value="BH/DH=1-180"/>
</dbReference>
<dbReference type="PDB" id="7MD7">
    <property type="method" value="X-ray"/>
    <property type="resolution" value="2.80 A"/>
    <property type="chains" value="1H/2H=1-180"/>
</dbReference>
<dbReference type="PDB" id="7RQ8">
    <property type="method" value="X-ray"/>
    <property type="resolution" value="2.50 A"/>
    <property type="chains" value="1H/2H=1-180"/>
</dbReference>
<dbReference type="PDB" id="7RQ9">
    <property type="method" value="X-ray"/>
    <property type="resolution" value="2.60 A"/>
    <property type="chains" value="1H/2H=1-180"/>
</dbReference>
<dbReference type="PDB" id="7RQA">
    <property type="method" value="X-ray"/>
    <property type="resolution" value="2.40 A"/>
    <property type="chains" value="1H/2H=1-180"/>
</dbReference>
<dbReference type="PDB" id="7RQB">
    <property type="method" value="X-ray"/>
    <property type="resolution" value="2.45 A"/>
    <property type="chains" value="1H/2H=1-180"/>
</dbReference>
<dbReference type="PDB" id="7RQC">
    <property type="method" value="X-ray"/>
    <property type="resolution" value="2.50 A"/>
    <property type="chains" value="1H/2H=1-180"/>
</dbReference>
<dbReference type="PDB" id="7RQD">
    <property type="method" value="X-ray"/>
    <property type="resolution" value="2.50 A"/>
    <property type="chains" value="1H/2H=1-180"/>
</dbReference>
<dbReference type="PDB" id="7RQE">
    <property type="method" value="X-ray"/>
    <property type="resolution" value="2.40 A"/>
    <property type="chains" value="1H/2H=1-180"/>
</dbReference>
<dbReference type="PDB" id="7U2H">
    <property type="method" value="X-ray"/>
    <property type="resolution" value="2.55 A"/>
    <property type="chains" value="1H/2H=1-180"/>
</dbReference>
<dbReference type="PDB" id="7U2I">
    <property type="method" value="X-ray"/>
    <property type="resolution" value="2.55 A"/>
    <property type="chains" value="1H/2H=1-180"/>
</dbReference>
<dbReference type="PDB" id="7U2J">
    <property type="method" value="X-ray"/>
    <property type="resolution" value="2.55 A"/>
    <property type="chains" value="1H/2H=1-180"/>
</dbReference>
<dbReference type="PDB" id="8CVJ">
    <property type="method" value="X-ray"/>
    <property type="resolution" value="2.40 A"/>
    <property type="chains" value="1H/2H=1-180"/>
</dbReference>
<dbReference type="PDB" id="8CVK">
    <property type="method" value="X-ray"/>
    <property type="resolution" value="2.50 A"/>
    <property type="chains" value="1H/2H=1-180"/>
</dbReference>
<dbReference type="PDB" id="8CVL">
    <property type="method" value="X-ray"/>
    <property type="resolution" value="2.30 A"/>
    <property type="chains" value="1H/2H=1-180"/>
</dbReference>
<dbReference type="PDB" id="8EKB">
    <property type="method" value="X-ray"/>
    <property type="resolution" value="2.70 A"/>
    <property type="chains" value="1H/2H=1-180"/>
</dbReference>
<dbReference type="PDB" id="8EV6">
    <property type="method" value="X-ray"/>
    <property type="resolution" value="2.95 A"/>
    <property type="chains" value="1H/2H=1-180"/>
</dbReference>
<dbReference type="PDB" id="8EV7">
    <property type="method" value="X-ray"/>
    <property type="resolution" value="2.89 A"/>
    <property type="chains" value="1H/2H=1-180"/>
</dbReference>
<dbReference type="PDB" id="8FC1">
    <property type="method" value="X-ray"/>
    <property type="resolution" value="2.50 A"/>
    <property type="chains" value="1H/2H=1-180"/>
</dbReference>
<dbReference type="PDB" id="8FC2">
    <property type="method" value="X-ray"/>
    <property type="resolution" value="2.50 A"/>
    <property type="chains" value="1H/2H=1-180"/>
</dbReference>
<dbReference type="PDB" id="8FC3">
    <property type="method" value="X-ray"/>
    <property type="resolution" value="2.60 A"/>
    <property type="chains" value="1H/2H=1-180"/>
</dbReference>
<dbReference type="PDB" id="8FC4">
    <property type="method" value="X-ray"/>
    <property type="resolution" value="2.45 A"/>
    <property type="chains" value="1H/2H=1-180"/>
</dbReference>
<dbReference type="PDB" id="8FC5">
    <property type="method" value="X-ray"/>
    <property type="resolution" value="2.65 A"/>
    <property type="chains" value="1H/2H=1-180"/>
</dbReference>
<dbReference type="PDB" id="8FC6">
    <property type="method" value="X-ray"/>
    <property type="resolution" value="2.35 A"/>
    <property type="chains" value="1H/2H=1-180"/>
</dbReference>
<dbReference type="PDB" id="8FOM">
    <property type="method" value="X-ray"/>
    <property type="resolution" value="3.58 A"/>
    <property type="chains" value="RH/YH=1-180"/>
</dbReference>
<dbReference type="PDB" id="8FON">
    <property type="method" value="X-ray"/>
    <property type="resolution" value="3.64 A"/>
    <property type="chains" value="RH/YH=1-180"/>
</dbReference>
<dbReference type="PDB" id="8G29">
    <property type="method" value="X-ray"/>
    <property type="resolution" value="2.55 A"/>
    <property type="chains" value="1H/2H=1-180"/>
</dbReference>
<dbReference type="PDB" id="8G2A">
    <property type="method" value="X-ray"/>
    <property type="resolution" value="2.45 A"/>
    <property type="chains" value="1H/2H=1-180"/>
</dbReference>
<dbReference type="PDB" id="8G2B">
    <property type="method" value="X-ray"/>
    <property type="resolution" value="2.55 A"/>
    <property type="chains" value="1H/2H=1-180"/>
</dbReference>
<dbReference type="PDB" id="8G2C">
    <property type="method" value="X-ray"/>
    <property type="resolution" value="2.65 A"/>
    <property type="chains" value="1H/2H=1-180"/>
</dbReference>
<dbReference type="PDB" id="8G2D">
    <property type="method" value="X-ray"/>
    <property type="resolution" value="2.70 A"/>
    <property type="chains" value="1H/2H=1-180"/>
</dbReference>
<dbReference type="PDB" id="8T8B">
    <property type="method" value="X-ray"/>
    <property type="resolution" value="2.65 A"/>
    <property type="chains" value="1H/2H=1-180"/>
</dbReference>
<dbReference type="PDB" id="8T8C">
    <property type="method" value="X-ray"/>
    <property type="resolution" value="2.60 A"/>
    <property type="chains" value="1H/2H=1-180"/>
</dbReference>
<dbReference type="PDB" id="8UD6">
    <property type="method" value="X-ray"/>
    <property type="resolution" value="2.70 A"/>
    <property type="chains" value="1H/2H=1-180"/>
</dbReference>
<dbReference type="PDB" id="8UD7">
    <property type="method" value="X-ray"/>
    <property type="resolution" value="2.55 A"/>
    <property type="chains" value="1H/2H=1-180"/>
</dbReference>
<dbReference type="PDB" id="8UD8">
    <property type="method" value="X-ray"/>
    <property type="resolution" value="2.60 A"/>
    <property type="chains" value="1H/2H=1-180"/>
</dbReference>
<dbReference type="PDB" id="8UVR">
    <property type="method" value="X-ray"/>
    <property type="resolution" value="2.60 A"/>
    <property type="chains" value="1H/2H=1-180"/>
</dbReference>
<dbReference type="PDB" id="8UVS">
    <property type="method" value="X-ray"/>
    <property type="resolution" value="2.75 A"/>
    <property type="chains" value="1H/2H=1-180"/>
</dbReference>
<dbReference type="PDB" id="8VTU">
    <property type="method" value="X-ray"/>
    <property type="resolution" value="2.40 A"/>
    <property type="chains" value="1H/2H=1-180"/>
</dbReference>
<dbReference type="PDB" id="8VTV">
    <property type="method" value="X-ray"/>
    <property type="resolution" value="2.55 A"/>
    <property type="chains" value="1H/2H=1-180"/>
</dbReference>
<dbReference type="PDB" id="8VTW">
    <property type="method" value="X-ray"/>
    <property type="resolution" value="2.35 A"/>
    <property type="chains" value="1H/2H=1-180"/>
</dbReference>
<dbReference type="PDB" id="8VTX">
    <property type="method" value="X-ray"/>
    <property type="resolution" value="2.40 A"/>
    <property type="chains" value="1H/2H=1-180"/>
</dbReference>
<dbReference type="PDB" id="8VTY">
    <property type="method" value="X-ray"/>
    <property type="resolution" value="2.60 A"/>
    <property type="chains" value="1H/2H=1-180"/>
</dbReference>
<dbReference type="PDB" id="8WV1">
    <property type="method" value="X-ray"/>
    <property type="resolution" value="3.99 A"/>
    <property type="chains" value="G/g=1-180"/>
</dbReference>
<dbReference type="PDB" id="9B00">
    <property type="method" value="X-ray"/>
    <property type="resolution" value="2.80 A"/>
    <property type="chains" value="1H/2H=1-180"/>
</dbReference>
<dbReference type="PDB" id="9D0J">
    <property type="method" value="X-ray"/>
    <property type="resolution" value="2.50 A"/>
    <property type="chains" value="1H/2H=1-180"/>
</dbReference>
<dbReference type="PDB" id="9D7R">
    <property type="method" value="X-ray"/>
    <property type="resolution" value="2.70 A"/>
    <property type="chains" value="1H/2H=1-180"/>
</dbReference>
<dbReference type="PDB" id="9D7S">
    <property type="method" value="X-ray"/>
    <property type="resolution" value="2.85 A"/>
    <property type="chains" value="1H/2H=1-180"/>
</dbReference>
<dbReference type="PDB" id="9D7T">
    <property type="method" value="X-ray"/>
    <property type="resolution" value="2.70 A"/>
    <property type="chains" value="1H/2H=1-180"/>
</dbReference>
<dbReference type="PDB" id="9DFC">
    <property type="method" value="X-ray"/>
    <property type="resolution" value="2.50 A"/>
    <property type="chains" value="1H/2H=1-180"/>
</dbReference>
<dbReference type="PDB" id="9DFD">
    <property type="method" value="X-ray"/>
    <property type="resolution" value="2.60 A"/>
    <property type="chains" value="1H/2H=1-180"/>
</dbReference>
<dbReference type="PDB" id="9DFE">
    <property type="method" value="X-ray"/>
    <property type="resolution" value="2.60 A"/>
    <property type="chains" value="1H/2H=1-180"/>
</dbReference>
<dbReference type="PDBsum" id="1VVJ"/>
<dbReference type="PDBsum" id="1VY4"/>
<dbReference type="PDBsum" id="1VY5"/>
<dbReference type="PDBsum" id="1VY6"/>
<dbReference type="PDBsum" id="1VY7"/>
<dbReference type="PDBsum" id="4L47"/>
<dbReference type="PDBsum" id="4L71"/>
<dbReference type="PDBsum" id="4LEL"/>
<dbReference type="PDBsum" id="4LFZ"/>
<dbReference type="PDBsum" id="4LNT"/>
<dbReference type="PDBsum" id="4LSK"/>
<dbReference type="PDBsum" id="4LT8"/>
<dbReference type="PDBsum" id="4P6F"/>
<dbReference type="PDBsum" id="4P70"/>
<dbReference type="PDBsum" id="4TUA"/>
<dbReference type="PDBsum" id="4TUB"/>
<dbReference type="PDBsum" id="4TUC"/>
<dbReference type="PDBsum" id="4TUD"/>
<dbReference type="PDBsum" id="4TUE"/>
<dbReference type="PDBsum" id="4V42"/>
<dbReference type="PDBsum" id="4V4P"/>
<dbReference type="PDBsum" id="4V4X"/>
<dbReference type="PDBsum" id="4V4Y"/>
<dbReference type="PDBsum" id="4V4Z"/>
<dbReference type="PDBsum" id="4V51"/>
<dbReference type="PDBsum" id="4V5A"/>
<dbReference type="PDBsum" id="4V5C"/>
<dbReference type="PDBsum" id="4V5D"/>
<dbReference type="PDBsum" id="4V5E"/>
<dbReference type="PDBsum" id="4V5F"/>
<dbReference type="PDBsum" id="4V5G"/>
<dbReference type="PDBsum" id="4V5J"/>
<dbReference type="PDBsum" id="4V5K"/>
<dbReference type="PDBsum" id="4V5L"/>
<dbReference type="PDBsum" id="4V5M"/>
<dbReference type="PDBsum" id="4V5N"/>
<dbReference type="PDBsum" id="4V5P"/>
<dbReference type="PDBsum" id="4V5Q"/>
<dbReference type="PDBsum" id="4V5R"/>
<dbReference type="PDBsum" id="4V5S"/>
<dbReference type="PDBsum" id="4V68"/>
<dbReference type="PDBsum" id="4V6A"/>
<dbReference type="PDBsum" id="4V6F"/>
<dbReference type="PDBsum" id="4V6G"/>
<dbReference type="PDBsum" id="4V7J"/>
<dbReference type="PDBsum" id="4V7K"/>
<dbReference type="PDBsum" id="4V7L"/>
<dbReference type="PDBsum" id="4V7M"/>
<dbReference type="PDBsum" id="4V7W"/>
<dbReference type="PDBsum" id="4V7X"/>
<dbReference type="PDBsum" id="4V7Y"/>
<dbReference type="PDBsum" id="4V7Z"/>
<dbReference type="PDBsum" id="4V87"/>
<dbReference type="PDBsum" id="4V8A"/>
<dbReference type="PDBsum" id="4V8B"/>
<dbReference type="PDBsum" id="4V8C"/>
<dbReference type="PDBsum" id="4V8D"/>
<dbReference type="PDBsum" id="4V8E"/>
<dbReference type="PDBsum" id="4V8F"/>
<dbReference type="PDBsum" id="4V8G"/>
<dbReference type="PDBsum" id="4V8H"/>
<dbReference type="PDBsum" id="4V8I"/>
<dbReference type="PDBsum" id="4V8J"/>
<dbReference type="PDBsum" id="4V8N"/>
<dbReference type="PDBsum" id="4V8O"/>
<dbReference type="PDBsum" id="4V8Q"/>
<dbReference type="PDBsum" id="4V8U"/>
<dbReference type="PDBsum" id="4V8X"/>
<dbReference type="PDBsum" id="4V90"/>
<dbReference type="PDBsum" id="4V95"/>
<dbReference type="PDBsum" id="4V97"/>
<dbReference type="PDBsum" id="4V9A"/>
<dbReference type="PDBsum" id="4V9B"/>
<dbReference type="PDBsum" id="4V9H"/>
<dbReference type="PDBsum" id="4V9I"/>
<dbReference type="PDBsum" id="4V9R"/>
<dbReference type="PDBsum" id="4V9S"/>
<dbReference type="PDBsum" id="4W2E"/>
<dbReference type="PDBsum" id="4W2F"/>
<dbReference type="PDBsum" id="4W2G"/>
<dbReference type="PDBsum" id="4W2H"/>
<dbReference type="PDBsum" id="4W2I"/>
<dbReference type="PDBsum" id="4W4G"/>
<dbReference type="PDBsum" id="4WPO"/>
<dbReference type="PDBsum" id="4WQ1"/>
<dbReference type="PDBsum" id="4WQF"/>
<dbReference type="PDBsum" id="4WQR"/>
<dbReference type="PDBsum" id="4WQU"/>
<dbReference type="PDBsum" id="4WQY"/>
<dbReference type="PDBsum" id="4WR6"/>
<dbReference type="PDBsum" id="4WRA"/>
<dbReference type="PDBsum" id="4WRO"/>
<dbReference type="PDBsum" id="4WSD"/>
<dbReference type="PDBsum" id="4WSM"/>
<dbReference type="PDBsum" id="4WT1"/>
<dbReference type="PDBsum" id="4WT8"/>
<dbReference type="PDBsum" id="4WU1"/>
<dbReference type="PDBsum" id="4WZD"/>
<dbReference type="PDBsum" id="4WZO"/>
<dbReference type="PDBsum" id="4Y4O"/>
<dbReference type="PDBsum" id="4Y4P"/>
<dbReference type="PDBsum" id="4YPB"/>
<dbReference type="PDBsum" id="4YZV"/>
<dbReference type="PDBsum" id="4Z3S"/>
<dbReference type="PDBsum" id="4Z8C"/>
<dbReference type="PDBsum" id="4ZER"/>
<dbReference type="PDBsum" id="4ZSN"/>
<dbReference type="PDBsum" id="5A9Z"/>
<dbReference type="PDBsum" id="5AA0"/>
<dbReference type="PDBsum" id="5CZP"/>
<dbReference type="PDBsum" id="5D8B"/>
<dbReference type="PDBsum" id="5DFE"/>
<dbReference type="PDBsum" id="5DOX"/>
<dbReference type="PDBsum" id="5DOY"/>
<dbReference type="PDBsum" id="5E7K"/>
<dbReference type="PDBsum" id="5E81"/>
<dbReference type="PDBsum" id="5EL4"/>
<dbReference type="PDBsum" id="5EL5"/>
<dbReference type="PDBsum" id="5EL6"/>
<dbReference type="PDBsum" id="5EL7"/>
<dbReference type="PDBsum" id="5F8K"/>
<dbReference type="PDBsum" id="5FDU"/>
<dbReference type="PDBsum" id="5FDV"/>
<dbReference type="PDBsum" id="5HAU"/>
<dbReference type="PDBsum" id="5HCP"/>
<dbReference type="PDBsum" id="5HCQ"/>
<dbReference type="PDBsum" id="5HCR"/>
<dbReference type="PDBsum" id="5HD1"/>
<dbReference type="PDBsum" id="5IB7"/>
<dbReference type="PDBsum" id="5IB8"/>
<dbReference type="PDBsum" id="5IBB"/>
<dbReference type="PDBsum" id="5IMQ"/>
<dbReference type="PDBsum" id="5IMR"/>
<dbReference type="PDBsum" id="5J30"/>
<dbReference type="PDBsum" id="5J3C"/>
<dbReference type="PDBsum" id="5J4B"/>
<dbReference type="PDBsum" id="5J4C"/>
<dbReference type="PDBsum" id="5J8B"/>
<dbReference type="PDBsum" id="5NDJ"/>
<dbReference type="PDBsum" id="5NDK"/>
<dbReference type="PDBsum" id="5OT7"/>
<dbReference type="PDBsum" id="5UQ7"/>
<dbReference type="PDBsum" id="5UQ8"/>
<dbReference type="PDBsum" id="5VP2"/>
<dbReference type="PDBsum" id="5VPO"/>
<dbReference type="PDBsum" id="5VPP"/>
<dbReference type="PDBsum" id="5W4K"/>
<dbReference type="PDBsum" id="5WIS"/>
<dbReference type="PDBsum" id="5WIT"/>
<dbReference type="PDBsum" id="5ZLU"/>
<dbReference type="PDBsum" id="6BUW"/>
<dbReference type="PDBsum" id="6BZ6"/>
<dbReference type="PDBsum" id="6BZ7"/>
<dbReference type="PDBsum" id="6BZ8"/>
<dbReference type="PDBsum" id="6C5L"/>
<dbReference type="PDBsum" id="6CAE"/>
<dbReference type="PDBsum" id="6CFJ"/>
<dbReference type="PDBsum" id="6CFK"/>
<dbReference type="PDBsum" id="6CFL"/>
<dbReference type="PDBsum" id="6CZR"/>
<dbReference type="PDBsum" id="6FKR"/>
<dbReference type="PDBsum" id="6GSJ"/>
<dbReference type="PDBsum" id="6GSK"/>
<dbReference type="PDBsum" id="6GSL"/>
<dbReference type="PDBsum" id="6GZQ"/>
<dbReference type="PDBsum" id="6GZX"/>
<dbReference type="PDBsum" id="6GZZ"/>
<dbReference type="PDBsum" id="6N9E"/>
<dbReference type="PDBsum" id="6N9F"/>
<dbReference type="PDBsum" id="6ND5"/>
<dbReference type="PDBsum" id="6ND6"/>
<dbReference type="PDBsum" id="6NDK"/>
<dbReference type="PDBsum" id="6NSH"/>
<dbReference type="PDBsum" id="6NTA"/>
<dbReference type="PDBsum" id="6NUO"/>
<dbReference type="PDBsum" id="6NWY"/>
<dbReference type="PDBsum" id="6O3M"/>
<dbReference type="PDBsum" id="6O97"/>
<dbReference type="PDBsum" id="6OF1"/>
<dbReference type="PDBsum" id="6OF6"/>
<dbReference type="PDBsum" id="6OJ2"/>
<dbReference type="PDBsum" id="6OPE"/>
<dbReference type="PDBsum" id="6ORD"/>
<dbReference type="PDBsum" id="6OSI"/>
<dbReference type="PDBsum" id="6OTR"/>
<dbReference type="PDBsum" id="6OXA"/>
<dbReference type="PDBsum" id="6OXI"/>
<dbReference type="PDBsum" id="6Q95"/>
<dbReference type="PDBsum" id="6QNQ"/>
<dbReference type="PDBsum" id="6QNR"/>
<dbReference type="PDBsum" id="6UCQ"/>
<dbReference type="PDBsum" id="6UO1"/>
<dbReference type="PDBsum" id="6XHV"/>
<dbReference type="PDBsum" id="6XHW"/>
<dbReference type="PDBsum" id="6XHX"/>
<dbReference type="PDBsum" id="6XHY"/>
<dbReference type="PDBsum" id="6XQD"/>
<dbReference type="PDBsum" id="6XQE"/>
<dbReference type="PDBsum" id="7AZO"/>
<dbReference type="PDBsum" id="7AZS"/>
<dbReference type="PDBsum" id="7JQL"/>
<dbReference type="PDBsum" id="7JQM"/>
<dbReference type="PDBsum" id="7LH5"/>
<dbReference type="PDBsum" id="7MD7"/>
<dbReference type="PDBsum" id="7RQ8"/>
<dbReference type="PDBsum" id="7RQ9"/>
<dbReference type="PDBsum" id="7RQA"/>
<dbReference type="PDBsum" id="7RQB"/>
<dbReference type="PDBsum" id="7RQC"/>
<dbReference type="PDBsum" id="7RQD"/>
<dbReference type="PDBsum" id="7RQE"/>
<dbReference type="PDBsum" id="7U2H"/>
<dbReference type="PDBsum" id="7U2I"/>
<dbReference type="PDBsum" id="7U2J"/>
<dbReference type="PDBsum" id="8CVJ"/>
<dbReference type="PDBsum" id="8CVK"/>
<dbReference type="PDBsum" id="8CVL"/>
<dbReference type="PDBsum" id="8EKB"/>
<dbReference type="PDBsum" id="8EV6"/>
<dbReference type="PDBsum" id="8EV7"/>
<dbReference type="PDBsum" id="8FC1"/>
<dbReference type="PDBsum" id="8FC2"/>
<dbReference type="PDBsum" id="8FC3"/>
<dbReference type="PDBsum" id="8FC4"/>
<dbReference type="PDBsum" id="8FC5"/>
<dbReference type="PDBsum" id="8FC6"/>
<dbReference type="PDBsum" id="8FOM"/>
<dbReference type="PDBsum" id="8FON"/>
<dbReference type="PDBsum" id="8G29"/>
<dbReference type="PDBsum" id="8G2A"/>
<dbReference type="PDBsum" id="8G2B"/>
<dbReference type="PDBsum" id="8G2C"/>
<dbReference type="PDBsum" id="8G2D"/>
<dbReference type="PDBsum" id="8T8B"/>
<dbReference type="PDBsum" id="8T8C"/>
<dbReference type="PDBsum" id="8UD6"/>
<dbReference type="PDBsum" id="8UD7"/>
<dbReference type="PDBsum" id="8UD8"/>
<dbReference type="PDBsum" id="8UVR"/>
<dbReference type="PDBsum" id="8UVS"/>
<dbReference type="PDBsum" id="8VTU"/>
<dbReference type="PDBsum" id="8VTV"/>
<dbReference type="PDBsum" id="8VTW"/>
<dbReference type="PDBsum" id="8VTX"/>
<dbReference type="PDBsum" id="8VTY"/>
<dbReference type="PDBsum" id="8WV1"/>
<dbReference type="PDBsum" id="9B00"/>
<dbReference type="PDBsum" id="9D0J"/>
<dbReference type="PDBsum" id="9D7R"/>
<dbReference type="PDBsum" id="9D7S"/>
<dbReference type="PDBsum" id="9D7T"/>
<dbReference type="PDBsum" id="9DFC"/>
<dbReference type="PDBsum" id="9DFD"/>
<dbReference type="PDBsum" id="9DFE"/>
<dbReference type="EMDB" id="EMD-0101"/>
<dbReference type="EMDB" id="EMD-0104"/>
<dbReference type="EMDB" id="EMD-0105"/>
<dbReference type="EMDB" id="EMD-3852"/>
<dbReference type="EMDB" id="EMD-4475"/>
<dbReference type="EMDB" id="EMD-6934"/>
<dbReference type="SMR" id="P0DOY8"/>
<dbReference type="IntAct" id="P0DOY8">
    <property type="interactions" value="6"/>
</dbReference>
<dbReference type="EnsemblBacteria" id="BAD71500">
    <property type="protein sequence ID" value="BAD71500"/>
    <property type="gene ID" value="BAD71500"/>
</dbReference>
<dbReference type="GeneID" id="3169807"/>
<dbReference type="KEGG" id="ttj:TTHA1677"/>
<dbReference type="eggNOG" id="COG0097">
    <property type="taxonomic scope" value="Bacteria"/>
</dbReference>
<dbReference type="HOGENOM" id="CLU_065464_1_2_0"/>
<dbReference type="Proteomes" id="UP000000532">
    <property type="component" value="Chromosome"/>
</dbReference>
<dbReference type="GO" id="GO:0022625">
    <property type="term" value="C:cytosolic large ribosomal subunit"/>
    <property type="evidence" value="ECO:0007669"/>
    <property type="project" value="TreeGrafter"/>
</dbReference>
<dbReference type="GO" id="GO:0019843">
    <property type="term" value="F:rRNA binding"/>
    <property type="evidence" value="ECO:0007669"/>
    <property type="project" value="UniProtKB-UniRule"/>
</dbReference>
<dbReference type="GO" id="GO:0003735">
    <property type="term" value="F:structural constituent of ribosome"/>
    <property type="evidence" value="ECO:0007669"/>
    <property type="project" value="InterPro"/>
</dbReference>
<dbReference type="GO" id="GO:0002181">
    <property type="term" value="P:cytoplasmic translation"/>
    <property type="evidence" value="ECO:0007669"/>
    <property type="project" value="TreeGrafter"/>
</dbReference>
<dbReference type="FunFam" id="3.90.930.12:FF:000001">
    <property type="entry name" value="50S ribosomal protein L6"/>
    <property type="match status" value="1"/>
</dbReference>
<dbReference type="FunFam" id="3.90.930.12:FF:000002">
    <property type="entry name" value="50S ribosomal protein L6"/>
    <property type="match status" value="1"/>
</dbReference>
<dbReference type="Gene3D" id="3.90.930.12">
    <property type="entry name" value="Ribosomal protein L6, alpha-beta domain"/>
    <property type="match status" value="2"/>
</dbReference>
<dbReference type="HAMAP" id="MF_01365_B">
    <property type="entry name" value="Ribosomal_uL6_B"/>
    <property type="match status" value="1"/>
</dbReference>
<dbReference type="InterPro" id="IPR000702">
    <property type="entry name" value="Ribosomal_uL6-like"/>
</dbReference>
<dbReference type="InterPro" id="IPR036789">
    <property type="entry name" value="Ribosomal_uL6-like_a/b-dom_sf"/>
</dbReference>
<dbReference type="InterPro" id="IPR020040">
    <property type="entry name" value="Ribosomal_uL6_a/b-dom"/>
</dbReference>
<dbReference type="InterPro" id="IPR019906">
    <property type="entry name" value="Ribosomal_uL6_bac-type"/>
</dbReference>
<dbReference type="NCBIfam" id="TIGR03654">
    <property type="entry name" value="L6_bact"/>
    <property type="match status" value="1"/>
</dbReference>
<dbReference type="PANTHER" id="PTHR11655">
    <property type="entry name" value="60S/50S RIBOSOMAL PROTEIN L6/L9"/>
    <property type="match status" value="1"/>
</dbReference>
<dbReference type="PANTHER" id="PTHR11655:SF14">
    <property type="entry name" value="LARGE RIBOSOMAL SUBUNIT PROTEIN UL6M"/>
    <property type="match status" value="1"/>
</dbReference>
<dbReference type="Pfam" id="PF00347">
    <property type="entry name" value="Ribosomal_L6"/>
    <property type="match status" value="2"/>
</dbReference>
<dbReference type="PIRSF" id="PIRSF002162">
    <property type="entry name" value="Ribosomal_L6"/>
    <property type="match status" value="1"/>
</dbReference>
<dbReference type="PRINTS" id="PR00059">
    <property type="entry name" value="RIBOSOMALL6"/>
</dbReference>
<dbReference type="SUPFAM" id="SSF56053">
    <property type="entry name" value="Ribosomal protein L6"/>
    <property type="match status" value="2"/>
</dbReference>
<gene>
    <name evidence="1" type="primary">rplF</name>
    <name type="ordered locus">TTHA1677</name>
</gene>
<accession>P0DOY8</accession>
<accession>Q5SHQ3</accession>
<evidence type="ECO:0000255" key="1">
    <source>
        <dbReference type="HAMAP-Rule" id="MF_01365"/>
    </source>
</evidence>
<evidence type="ECO:0000269" key="2">
    <source>
    </source>
</evidence>
<evidence type="ECO:0000269" key="3">
    <source>
    </source>
</evidence>
<evidence type="ECO:0000305" key="4"/>
<evidence type="ECO:0007829" key="5">
    <source>
        <dbReference type="PDB" id="4WT8"/>
    </source>
</evidence>
<keyword id="KW-0002">3D-structure</keyword>
<keyword id="KW-0903">Direct protein sequencing</keyword>
<keyword id="KW-1185">Reference proteome</keyword>
<keyword id="KW-0687">Ribonucleoprotein</keyword>
<keyword id="KW-0689">Ribosomal protein</keyword>
<keyword id="KW-0694">RNA-binding</keyword>
<keyword id="KW-0699">rRNA-binding</keyword>
<comment type="function">
    <text>This protein binds to the 23S rRNA, and is important in its secondary structure. It is located near the subunit interface in the base of the L7/L12 stalk, and near the tRNA binding site of the peptidyltransferase center.</text>
</comment>
<comment type="subunit">
    <text>Part of the 50S ribosomal subunit.</text>
</comment>
<comment type="mass spectrometry"/>
<comment type="similarity">
    <text evidence="1">Belongs to the universal ribosomal protein uL6 family.</text>
</comment>
<feature type="initiator methionine" description="Removed" evidence="2">
    <location>
        <position position="1"/>
    </location>
</feature>
<feature type="chain" id="PRO_0000131072" description="Large ribosomal subunit protein uL6">
    <location>
        <begin position="2"/>
        <end position="180"/>
    </location>
</feature>
<feature type="sequence conflict" description="In Ref. 2; AA sequence." evidence="4" ref="2">
    <original>VA</original>
    <variation>AV</variation>
    <location>
        <begin position="19"/>
        <end position="20"/>
    </location>
</feature>
<feature type="sequence conflict" description="In Ref. 2; AA sequence." evidence="4" ref="2">
    <original>K</original>
    <variation>L</variation>
    <location>
        <position position="25"/>
    </location>
</feature>
<feature type="sequence conflict" description="In Ref. 2; AA sequence." evidence="4" ref="2">
    <original>K</original>
    <variation>Y</variation>
    <location>
        <position position="27"/>
    </location>
</feature>
<feature type="strand" evidence="5">
    <location>
        <begin position="21"/>
        <end position="28"/>
    </location>
</feature>
<feature type="strand" evidence="5">
    <location>
        <begin position="31"/>
        <end position="36"/>
    </location>
</feature>
<feature type="strand" evidence="5">
    <location>
        <begin position="47"/>
        <end position="49"/>
    </location>
</feature>
<feature type="helix" evidence="5">
    <location>
        <begin position="59"/>
        <end position="79"/>
    </location>
</feature>
<feature type="strand" evidence="5">
    <location>
        <begin position="86"/>
        <end position="93"/>
    </location>
</feature>
<feature type="strand" evidence="5">
    <location>
        <begin position="95"/>
        <end position="99"/>
    </location>
</feature>
<feature type="strand" evidence="5">
    <location>
        <begin position="102"/>
        <end position="106"/>
    </location>
</feature>
<feature type="strand" evidence="5">
    <location>
        <begin position="108"/>
        <end position="111"/>
    </location>
</feature>
<feature type="strand" evidence="5">
    <location>
        <begin position="113"/>
        <end position="115"/>
    </location>
</feature>
<feature type="strand" evidence="5">
    <location>
        <begin position="121"/>
        <end position="124"/>
    </location>
</feature>
<feature type="strand" evidence="5">
    <location>
        <begin position="126"/>
        <end position="138"/>
    </location>
</feature>
<feature type="helix" evidence="5">
    <location>
        <begin position="139"/>
        <end position="150"/>
    </location>
</feature>
<feature type="strand" evidence="5">
    <location>
        <begin position="161"/>
        <end position="163"/>
    </location>
</feature>
<proteinExistence type="evidence at protein level"/>
<reference key="1">
    <citation type="submission" date="2004-11" db="EMBL/GenBank/DDBJ databases">
        <title>Complete genome sequence of Thermus thermophilus HB8.</title>
        <authorList>
            <person name="Masui R."/>
            <person name="Kurokawa K."/>
            <person name="Nakagawa N."/>
            <person name="Tokunaga F."/>
            <person name="Koyama Y."/>
            <person name="Shibata T."/>
            <person name="Oshima T."/>
            <person name="Yokoyama S."/>
            <person name="Yasunaga T."/>
            <person name="Kuramitsu S."/>
        </authorList>
    </citation>
    <scope>NUCLEOTIDE SEQUENCE [LARGE SCALE GENOMIC DNA]</scope>
    <source>
        <strain>ATCC 27634 / DSM 579 / HB8</strain>
    </source>
</reference>
<reference key="2">
    <citation type="journal article" date="2000" name="Biol. Chem.">
        <title>Identification of the 50S ribosomal proteins from the eubacterium Thermus thermophilus.</title>
        <authorList>
            <person name="Katsani K.R."/>
            <person name="Tsiboli P."/>
            <person name="Anagnostopoulos K."/>
            <person name="Urlaub H."/>
            <person name="Choli-Papadopoulou T."/>
        </authorList>
    </citation>
    <scope>PROTEIN SEQUENCE OF 2-29</scope>
    <source>
        <strain>ATCC 27634 / DSM 579 / HB8</strain>
    </source>
</reference>
<reference key="3">
    <citation type="journal article" date="2005" name="Proteomics">
        <title>Extending ribosomal protein identifications to unsequenced bacterial strains using matrix-assisted laser desorption/ionization mass spectrometry.</title>
        <authorList>
            <person name="Suh M.-J."/>
            <person name="Hamburg D.M."/>
            <person name="Gregory S.T."/>
            <person name="Dahlberg A.E."/>
            <person name="Limbach P.A."/>
        </authorList>
    </citation>
    <scope>MASS SPECTROMETRY</scope>
    <source>
        <strain>ATCC 27634 / DSM 579 / HB8</strain>
    </source>
</reference>
<reference key="4">
    <citation type="journal article" date="2001" name="Cell">
        <title>The path of messenger RNA through the ribosome.</title>
        <authorList>
            <person name="Yusupova G.Z."/>
            <person name="Yusupov M.M."/>
            <person name="Cate J.H.D."/>
            <person name="Noller H.F."/>
        </authorList>
    </citation>
    <scope>X-RAY CRYSTALLOGRAPHY (5.0 ANGSTROMS) OF THE RIBOSOME</scope>
</reference>
<reference key="5">
    <citation type="journal article" date="2001" name="Science">
        <title>Crystal structure of the ribosome at 5.5 A resolution.</title>
        <authorList>
            <person name="Yusupov M.M."/>
            <person name="Yusupova G.Z."/>
            <person name="Baucom A."/>
            <person name="Lieberman K."/>
            <person name="Earnest T.N."/>
            <person name="Cate J.H.D."/>
            <person name="Noller H.F."/>
        </authorList>
    </citation>
    <scope>X-RAY CRYSTALLOGRAPHY (5.5 ANGSTROMS) OF THE RIBOSOME</scope>
</reference>
<reference key="6">
    <citation type="journal article" date="2008" name="Science">
        <title>Insights into translational termination from the structure of RF2 bound to the ribosome.</title>
        <authorList>
            <person name="Weixlbaumer A."/>
            <person name="Jin H."/>
            <person name="Neubauer C."/>
            <person name="Voorhees R.M."/>
            <person name="Petry S."/>
            <person name="Kelley A.C."/>
            <person name="Ramakrishnan V."/>
        </authorList>
    </citation>
    <scope>X-RAY CRYSTALLOGRAPHY (3.45 ANGSTROMS) OF 70S RIBOSOME IN COMPLEX WITH RF2</scope>
    <scope>SUBUNIT</scope>
</reference>
<reference key="7">
    <citation type="journal article" date="2010" name="Proc. Natl. Acad. Sci. U.S.A.">
        <title>Structure of the 70S ribosome bound to release factor 2 and a substrate analog provides insights into catalysis of peptide release.</title>
        <authorList>
            <person name="Jin H."/>
            <person name="Kelley A.C."/>
            <person name="Loakes D."/>
            <person name="Ramakrishnan V."/>
        </authorList>
    </citation>
    <scope>X-RAY CRYSTALLOGRAPHY (3.10 ANGSTROMS) OF 70S RIBOSOME IN COMPLEX WITH RF2</scope>
    <scope>SUBUNIT</scope>
</reference>
<sequence>MSRIGRLPIPVPKGVSVEVAPGRVKVKGPKGELEVPVSPEMRVVVEEGVVRVERPSDERRHKSLHGLTRTLIANAVKGVSEGYSKELLIKGIGYRARLVGRALELTVGFSHPVVVEPPEGITFEVPEPTRVRVSGIDKQKVGQVAANIRAIRKPSAYHEKGIYYAGEPVRLKPGKAGAKK</sequence>
<protein>
    <recommendedName>
        <fullName evidence="1">Large ribosomal subunit protein uL6</fullName>
    </recommendedName>
    <alternativeName>
        <fullName evidence="4">50S ribosomal protein L6</fullName>
    </alternativeName>
</protein>